<name>C3AR_CAVPO</name>
<sequence length="475" mass="53570">MESSSAETNSTGLHLEPQYQPETILAMAILGLTFVLGLPGNGLVLWVAGLKMRRTVNTVWFLHLTVADFVCCLSLPFSMAHLALRGYWPYGEILCKFIPTVIIFNMFASVFLLTAISLDRCLMVLKPIWCQNHRNVRTACIICGCIWLVAFVLCIPVFVYRETFTLENHTICTYNFSPGSFDYLDYAYDRDAWGYGTPDPIVQLPGEMEHRSDPSSFQTQDGPWSVTTTLYSQTSQRPSEDSFHMDSAKLSGQGKYVDVVLPTNLCGLPMEENRTNTLHNAAFLSSDLDVSNATQKCLSTPEPPQDFWDDLSPFTHEYRTPRLLKVITFTRLVVGFLLPMIIMVACYTLIIFRMRRVRVVKSWNKALHLAMVVVTIFLICWAPYHVFGVLILFINPESRVGAALLSWDHVSIALASANSCFNPFLYALLGRDLRKRVRQSMKGILEAAFSEDISKSTSFIQAKAFSEKHSLSTNV</sequence>
<feature type="chain" id="PRO_0000069201" description="C3a anaphylatoxin chemotactic receptor">
    <location>
        <begin position="1"/>
        <end position="475"/>
    </location>
</feature>
<feature type="topological domain" description="Extracellular" evidence="3">
    <location>
        <begin position="1"/>
        <end position="23"/>
    </location>
</feature>
<feature type="transmembrane region" description="Helical; Name=1" evidence="3">
    <location>
        <begin position="24"/>
        <end position="46"/>
    </location>
</feature>
<feature type="topological domain" description="Cytoplasmic" evidence="3">
    <location>
        <begin position="47"/>
        <end position="57"/>
    </location>
</feature>
<feature type="transmembrane region" description="Helical; Name=2" evidence="3">
    <location>
        <begin position="58"/>
        <end position="80"/>
    </location>
</feature>
<feature type="topological domain" description="Extracellular" evidence="3">
    <location>
        <begin position="81"/>
        <end position="96"/>
    </location>
</feature>
<feature type="transmembrane region" description="Helical; Name=3" evidence="3">
    <location>
        <begin position="97"/>
        <end position="118"/>
    </location>
</feature>
<feature type="topological domain" description="Cytoplasmic" evidence="3">
    <location>
        <begin position="119"/>
        <end position="139"/>
    </location>
</feature>
<feature type="transmembrane region" description="Helical; Name=4" evidence="3">
    <location>
        <begin position="140"/>
        <end position="160"/>
    </location>
</feature>
<feature type="topological domain" description="Extracellular" evidence="3">
    <location>
        <begin position="161"/>
        <end position="331"/>
    </location>
</feature>
<feature type="transmembrane region" description="Helical; Name=5" evidence="3">
    <location>
        <begin position="332"/>
        <end position="351"/>
    </location>
</feature>
<feature type="topological domain" description="Cytoplasmic" evidence="3">
    <location>
        <begin position="352"/>
        <end position="368"/>
    </location>
</feature>
<feature type="transmembrane region" description="Helical; Name=6" evidence="3">
    <location>
        <begin position="369"/>
        <end position="391"/>
    </location>
</feature>
<feature type="topological domain" description="Extracellular" evidence="3">
    <location>
        <begin position="392"/>
        <end position="408"/>
    </location>
</feature>
<feature type="transmembrane region" description="Helical; Name=7" evidence="3">
    <location>
        <begin position="409"/>
        <end position="429"/>
    </location>
</feature>
<feature type="topological domain" description="Cytoplasmic" evidence="3">
    <location>
        <begin position="430"/>
        <end position="475"/>
    </location>
</feature>
<feature type="modified residue" description="Sulfotyrosine" evidence="1">
    <location>
        <position position="174"/>
    </location>
</feature>
<feature type="modified residue" description="Sulfotyrosine" evidence="1">
    <location>
        <position position="183"/>
    </location>
</feature>
<feature type="modified residue" description="Phosphoserine" evidence="2">
    <location>
        <position position="450"/>
    </location>
</feature>
<feature type="glycosylation site" description="N-linked (GlcNAc...) asparagine" evidence="3">
    <location>
        <position position="9"/>
    </location>
</feature>
<feature type="glycosylation site" description="N-linked (GlcNAc...) asparagine" evidence="3">
    <location>
        <position position="168"/>
    </location>
</feature>
<feature type="glycosylation site" description="N-linked (GlcNAc...) asparagine" evidence="3">
    <location>
        <position position="273"/>
    </location>
</feature>
<feature type="glycosylation site" description="N-linked (GlcNAc...) asparagine" evidence="3">
    <location>
        <position position="292"/>
    </location>
</feature>
<feature type="disulfide bond" evidence="4">
    <location>
        <begin position="95"/>
        <end position="172"/>
    </location>
</feature>
<feature type="splice variant" id="VSP_010628" description="In isoform 2." evidence="6">
    <location>
        <begin position="254"/>
        <end position="288"/>
    </location>
</feature>
<feature type="sequence conflict" description="In Ref. 2; AAC36503." evidence="7" ref="2">
    <original>E</original>
    <variation>D</variation>
    <location>
        <position position="2"/>
    </location>
</feature>
<feature type="sequence conflict" description="In Ref. 2; AAC36503." evidence="7" ref="2">
    <original>V</original>
    <variation>A</variation>
    <location>
        <position position="357"/>
    </location>
</feature>
<protein>
    <recommendedName>
        <fullName>C3a anaphylatoxin chemotactic receptor</fullName>
        <shortName>C3AR</shortName>
        <shortName>C3a-R</shortName>
    </recommendedName>
</protein>
<keyword id="KW-0025">Alternative splicing</keyword>
<keyword id="KW-1003">Cell membrane</keyword>
<keyword id="KW-0145">Chemotaxis</keyword>
<keyword id="KW-1015">Disulfide bond</keyword>
<keyword id="KW-0297">G-protein coupled receptor</keyword>
<keyword id="KW-0325">Glycoprotein</keyword>
<keyword id="KW-0472">Membrane</keyword>
<keyword id="KW-0597">Phosphoprotein</keyword>
<keyword id="KW-0675">Receptor</keyword>
<keyword id="KW-1185">Reference proteome</keyword>
<keyword id="KW-0765">Sulfation</keyword>
<keyword id="KW-0807">Transducer</keyword>
<keyword id="KW-0812">Transmembrane</keyword>
<keyword id="KW-1133">Transmembrane helix</keyword>
<proteinExistence type="evidence at transcript level"/>
<evidence type="ECO:0000250" key="1"/>
<evidence type="ECO:0000250" key="2">
    <source>
        <dbReference type="UniProtKB" id="O09047"/>
    </source>
</evidence>
<evidence type="ECO:0000255" key="3"/>
<evidence type="ECO:0000255" key="4">
    <source>
        <dbReference type="PROSITE-ProRule" id="PRU00521"/>
    </source>
</evidence>
<evidence type="ECO:0000269" key="5">
    <source>
    </source>
</evidence>
<evidence type="ECO:0000303" key="6">
    <source>
    </source>
</evidence>
<evidence type="ECO:0000305" key="7"/>
<organism>
    <name type="scientific">Cavia porcellus</name>
    <name type="common">Guinea pig</name>
    <dbReference type="NCBI Taxonomy" id="10141"/>
    <lineage>
        <taxon>Eukaryota</taxon>
        <taxon>Metazoa</taxon>
        <taxon>Chordata</taxon>
        <taxon>Craniata</taxon>
        <taxon>Vertebrata</taxon>
        <taxon>Euteleostomi</taxon>
        <taxon>Mammalia</taxon>
        <taxon>Eutheria</taxon>
        <taxon>Euarchontoglires</taxon>
        <taxon>Glires</taxon>
        <taxon>Rodentia</taxon>
        <taxon>Hystricomorpha</taxon>
        <taxon>Caviidae</taxon>
        <taxon>Cavia</taxon>
    </lineage>
</organism>
<comment type="function">
    <text>Receptor for the chemotactic and inflammatory peptide anaphylatoxin C3a. This receptor stimulates chemotaxis, granule enzyme release and superoxide anion production.</text>
</comment>
<comment type="subunit">
    <text evidence="2">Interacts with VGF-derived peptide TLQP-21 (By similarity).</text>
</comment>
<comment type="subcellular location">
    <subcellularLocation>
        <location>Cell membrane</location>
        <topology>Multi-pass membrane protein</topology>
    </subcellularLocation>
</comment>
<comment type="alternative products">
    <event type="alternative splicing"/>
    <isoform>
        <id>O88680-1</id>
        <name>1</name>
        <name>gpC3aR-L</name>
        <sequence type="displayed"/>
    </isoform>
    <isoform>
        <id>O88680-2</id>
        <name>2</name>
        <name>gpC3aR-S</name>
        <sequence type="described" ref="VSP_010628"/>
    </isoform>
</comment>
<comment type="tissue specificity">
    <text evidence="5">Expressed in the heart, kidney, lung, liver, peritoneal macrophages and spleen.</text>
</comment>
<comment type="similarity">
    <text evidence="4">Belongs to the G-protein coupled receptor 1 family.</text>
</comment>
<reference key="1">
    <citation type="journal article" date="1998" name="J. Immunol.">
        <title>Human anaphylatoxin C4a is a potent agonist of the guinea pig but not the human C3a receptor.</title>
        <authorList>
            <person name="Lienenklaus S."/>
            <person name="Ames R.S."/>
            <person name="Tornetta M.A."/>
            <person name="Sarau H.M."/>
            <person name="Foley J.J."/>
            <person name="Crass T."/>
            <person name="Sohns B."/>
            <person name="Raffetseder U."/>
            <person name="Grove M."/>
            <person name="Hoelzer A."/>
            <person name="Klos A."/>
            <person name="Koehl J."/>
            <person name="Bautsch W."/>
        </authorList>
    </citation>
    <scope>NUCLEOTIDE SEQUENCE [GENOMIC DNA] (ISOFORM 1)</scope>
</reference>
<reference key="2">
    <citation type="journal article" date="1998" name="J. Immunol.">
        <title>Molecular cloning of two isoforms of the guinea pig C3a anaphylatoxin receptor: alternative splicing in the large extracellular loop.</title>
        <authorList>
            <person name="Fukuoka Y."/>
            <person name="Ember J.A."/>
            <person name="Hugli T.E."/>
        </authorList>
    </citation>
    <scope>NUCLEOTIDE SEQUENCE [MRNA] (ISOFORMS 1 AND 2)</scope>
    <scope>TISSUE SPECIFICITY</scope>
    <source>
        <strain>Hartley</strain>
        <tissue>Spleen</tissue>
    </source>
</reference>
<dbReference type="EMBL" id="AJ006402">
    <property type="protein sequence ID" value="CAA07002.1"/>
    <property type="molecule type" value="Genomic_DNA"/>
</dbReference>
<dbReference type="EMBL" id="U86378">
    <property type="protein sequence ID" value="AAC36503.1"/>
    <property type="molecule type" value="mRNA"/>
</dbReference>
<dbReference type="RefSeq" id="NP_001166589.1">
    <property type="nucleotide sequence ID" value="NM_001173118.1"/>
</dbReference>
<dbReference type="SMR" id="O88680"/>
<dbReference type="FunCoup" id="O88680">
    <property type="interactions" value="946"/>
</dbReference>
<dbReference type="STRING" id="10141.ENSCPOP00000019559"/>
<dbReference type="GlyCosmos" id="O88680">
    <property type="glycosylation" value="4 sites, No reported glycans"/>
</dbReference>
<dbReference type="Ensembl" id="ENSCPOT00000009625.3">
    <molecule id="O88680-1"/>
    <property type="protein sequence ID" value="ENSCPOP00000019559.1"/>
    <property type="gene ID" value="ENSCPOG00000026687.2"/>
</dbReference>
<dbReference type="GeneID" id="100379246"/>
<dbReference type="KEGG" id="cpoc:100379246"/>
<dbReference type="CTD" id="719"/>
<dbReference type="VEuPathDB" id="HostDB:ENSCPOG00000026687"/>
<dbReference type="eggNOG" id="ENOG502R35Z">
    <property type="taxonomic scope" value="Eukaryota"/>
</dbReference>
<dbReference type="GeneTree" id="ENSGT01130000278339"/>
<dbReference type="HOGENOM" id="CLU_009579_35_0_1"/>
<dbReference type="InParanoid" id="O88680"/>
<dbReference type="OMA" id="MCGYNFG"/>
<dbReference type="OrthoDB" id="10037617at2759"/>
<dbReference type="TreeFam" id="TF330976"/>
<dbReference type="Proteomes" id="UP000005447">
    <property type="component" value="Unassembled WGS sequence"/>
</dbReference>
<dbReference type="Bgee" id="ENSCPOG00000026687">
    <property type="expression patterns" value="Expressed in liver and 12 other cell types or tissues"/>
</dbReference>
<dbReference type="GO" id="GO:0005886">
    <property type="term" value="C:plasma membrane"/>
    <property type="evidence" value="ECO:0007669"/>
    <property type="project" value="UniProtKB-SubCell"/>
</dbReference>
<dbReference type="GO" id="GO:0004876">
    <property type="term" value="F:complement component C3a receptor activity"/>
    <property type="evidence" value="ECO:0000314"/>
    <property type="project" value="UniProtKB"/>
</dbReference>
<dbReference type="GO" id="GO:0004878">
    <property type="term" value="F:complement component C5a receptor activity"/>
    <property type="evidence" value="ECO:0007669"/>
    <property type="project" value="TreeGrafter"/>
</dbReference>
<dbReference type="GO" id="GO:0004930">
    <property type="term" value="F:G protein-coupled receptor activity"/>
    <property type="evidence" value="ECO:0007669"/>
    <property type="project" value="UniProtKB-KW"/>
</dbReference>
<dbReference type="GO" id="GO:0019722">
    <property type="term" value="P:calcium-mediated signaling"/>
    <property type="evidence" value="ECO:0007669"/>
    <property type="project" value="Ensembl"/>
</dbReference>
<dbReference type="GO" id="GO:0006935">
    <property type="term" value="P:chemotaxis"/>
    <property type="evidence" value="ECO:0007669"/>
    <property type="project" value="UniProtKB-KW"/>
</dbReference>
<dbReference type="GO" id="GO:0006954">
    <property type="term" value="P:inflammatory response"/>
    <property type="evidence" value="ECO:0007669"/>
    <property type="project" value="TreeGrafter"/>
</dbReference>
<dbReference type="GO" id="GO:0007200">
    <property type="term" value="P:phospholipase C-activating G protein-coupled receptor signaling pathway"/>
    <property type="evidence" value="ECO:0007669"/>
    <property type="project" value="TreeGrafter"/>
</dbReference>
<dbReference type="GO" id="GO:0045766">
    <property type="term" value="P:positive regulation of angiogenesis"/>
    <property type="evidence" value="ECO:0007669"/>
    <property type="project" value="Ensembl"/>
</dbReference>
<dbReference type="GO" id="GO:0007204">
    <property type="term" value="P:positive regulation of cytosolic calcium ion concentration"/>
    <property type="evidence" value="ECO:0007669"/>
    <property type="project" value="TreeGrafter"/>
</dbReference>
<dbReference type="GO" id="GO:0010759">
    <property type="term" value="P:positive regulation of macrophage chemotaxis"/>
    <property type="evidence" value="ECO:0007669"/>
    <property type="project" value="Ensembl"/>
</dbReference>
<dbReference type="GO" id="GO:0090023">
    <property type="term" value="P:positive regulation of neutrophil chemotaxis"/>
    <property type="evidence" value="ECO:0007669"/>
    <property type="project" value="Ensembl"/>
</dbReference>
<dbReference type="GO" id="GO:0010575">
    <property type="term" value="P:positive regulation of vascular endothelial growth factor production"/>
    <property type="evidence" value="ECO:0007669"/>
    <property type="project" value="Ensembl"/>
</dbReference>
<dbReference type="FunFam" id="1.20.1070.10:FF:000269">
    <property type="entry name" value="C3a anaphylatoxin chemotactic receptor"/>
    <property type="match status" value="1"/>
</dbReference>
<dbReference type="FunFam" id="1.20.1070.10:FF:000284">
    <property type="entry name" value="C3a anaphylatoxin chemotactic receptor"/>
    <property type="match status" value="1"/>
</dbReference>
<dbReference type="Gene3D" id="1.20.1070.10">
    <property type="entry name" value="Rhodopsin 7-helix transmembrane proteins"/>
    <property type="match status" value="2"/>
</dbReference>
<dbReference type="InterPro" id="IPR001644">
    <property type="entry name" value="Anaphtx_C3AR1"/>
</dbReference>
<dbReference type="InterPro" id="IPR002234">
    <property type="entry name" value="Anphylx_rcpt_C3a/C5a1-2"/>
</dbReference>
<dbReference type="InterPro" id="IPR000826">
    <property type="entry name" value="Formyl_rcpt-rel"/>
</dbReference>
<dbReference type="InterPro" id="IPR000276">
    <property type="entry name" value="GPCR_Rhodpsn"/>
</dbReference>
<dbReference type="InterPro" id="IPR017452">
    <property type="entry name" value="GPCR_Rhodpsn_7TM"/>
</dbReference>
<dbReference type="PANTHER" id="PTHR24225:SF28">
    <property type="entry name" value="C3A ANAPHYLATOXIN CHEMOTACTIC RECEPTOR"/>
    <property type="match status" value="1"/>
</dbReference>
<dbReference type="PANTHER" id="PTHR24225">
    <property type="entry name" value="CHEMOTACTIC RECEPTOR"/>
    <property type="match status" value="1"/>
</dbReference>
<dbReference type="Pfam" id="PF00001">
    <property type="entry name" value="7tm_1"/>
    <property type="match status" value="2"/>
</dbReference>
<dbReference type="PRINTS" id="PR01104">
    <property type="entry name" value="ANPHYLATOXNR"/>
</dbReference>
<dbReference type="PRINTS" id="PR01060">
    <property type="entry name" value="C3ANPHYLTXNR"/>
</dbReference>
<dbReference type="PRINTS" id="PR00237">
    <property type="entry name" value="GPCRRHODOPSN"/>
</dbReference>
<dbReference type="SUPFAM" id="SSF81321">
    <property type="entry name" value="Family A G protein-coupled receptor-like"/>
    <property type="match status" value="1"/>
</dbReference>
<dbReference type="PROSITE" id="PS00237">
    <property type="entry name" value="G_PROTEIN_RECEP_F1_1"/>
    <property type="match status" value="1"/>
</dbReference>
<dbReference type="PROSITE" id="PS50262">
    <property type="entry name" value="G_PROTEIN_RECEP_F1_2"/>
    <property type="match status" value="1"/>
</dbReference>
<accession>O88680</accession>
<accession>Q9QWG9</accession>
<gene>
    <name type="primary">C3AR1</name>
</gene>